<dbReference type="EMBL" id="CP000395">
    <property type="protein sequence ID" value="ABH01762.1"/>
    <property type="molecule type" value="Genomic_DNA"/>
</dbReference>
<dbReference type="EMBL" id="CP002933">
    <property type="status" value="NOT_ANNOTATED_CDS"/>
    <property type="molecule type" value="Genomic_DNA"/>
</dbReference>
<dbReference type="RefSeq" id="WP_004789520.1">
    <property type="nucleotide sequence ID" value="NZ_CP160066.1"/>
</dbReference>
<dbReference type="SMR" id="Q0SN16"/>
<dbReference type="STRING" id="29518.BLA32_01805"/>
<dbReference type="KEGG" id="baf:BAPKO_0519"/>
<dbReference type="OrthoDB" id="9810484at2"/>
<dbReference type="Proteomes" id="UP000005216">
    <property type="component" value="Chromosome"/>
</dbReference>
<dbReference type="GO" id="GO:0005737">
    <property type="term" value="C:cytoplasm"/>
    <property type="evidence" value="ECO:0007669"/>
    <property type="project" value="UniProtKB-ARBA"/>
</dbReference>
<dbReference type="GO" id="GO:0015935">
    <property type="term" value="C:small ribosomal subunit"/>
    <property type="evidence" value="ECO:0007669"/>
    <property type="project" value="TreeGrafter"/>
</dbReference>
<dbReference type="GO" id="GO:0019843">
    <property type="term" value="F:rRNA binding"/>
    <property type="evidence" value="ECO:0007669"/>
    <property type="project" value="UniProtKB-UniRule"/>
</dbReference>
<dbReference type="GO" id="GO:0003735">
    <property type="term" value="F:structural constituent of ribosome"/>
    <property type="evidence" value="ECO:0007669"/>
    <property type="project" value="InterPro"/>
</dbReference>
<dbReference type="GO" id="GO:0008270">
    <property type="term" value="F:zinc ion binding"/>
    <property type="evidence" value="ECO:0007669"/>
    <property type="project" value="UniProtKB-UniRule"/>
</dbReference>
<dbReference type="GO" id="GO:0006412">
    <property type="term" value="P:translation"/>
    <property type="evidence" value="ECO:0007669"/>
    <property type="project" value="UniProtKB-UniRule"/>
</dbReference>
<dbReference type="FunFam" id="4.10.830.10:FF:000001">
    <property type="entry name" value="30S ribosomal protein S14 type Z"/>
    <property type="match status" value="1"/>
</dbReference>
<dbReference type="Gene3D" id="4.10.830.10">
    <property type="entry name" value="30s Ribosomal Protein S14, Chain N"/>
    <property type="match status" value="1"/>
</dbReference>
<dbReference type="HAMAP" id="MF_01364_B">
    <property type="entry name" value="Ribosomal_uS14_2_B"/>
    <property type="match status" value="1"/>
</dbReference>
<dbReference type="InterPro" id="IPR001209">
    <property type="entry name" value="Ribosomal_uS14"/>
</dbReference>
<dbReference type="InterPro" id="IPR023053">
    <property type="entry name" value="Ribosomal_uS14_bact"/>
</dbReference>
<dbReference type="InterPro" id="IPR018271">
    <property type="entry name" value="Ribosomal_uS14_CS"/>
</dbReference>
<dbReference type="InterPro" id="IPR043140">
    <property type="entry name" value="Ribosomal_uS14_sf"/>
</dbReference>
<dbReference type="NCBIfam" id="NF005974">
    <property type="entry name" value="PRK08061.1"/>
    <property type="match status" value="1"/>
</dbReference>
<dbReference type="PANTHER" id="PTHR19836">
    <property type="entry name" value="30S RIBOSOMAL PROTEIN S14"/>
    <property type="match status" value="1"/>
</dbReference>
<dbReference type="PANTHER" id="PTHR19836:SF19">
    <property type="entry name" value="SMALL RIBOSOMAL SUBUNIT PROTEIN US14M"/>
    <property type="match status" value="1"/>
</dbReference>
<dbReference type="Pfam" id="PF00253">
    <property type="entry name" value="Ribosomal_S14"/>
    <property type="match status" value="1"/>
</dbReference>
<dbReference type="SUPFAM" id="SSF57716">
    <property type="entry name" value="Glucocorticoid receptor-like (DNA-binding domain)"/>
    <property type="match status" value="1"/>
</dbReference>
<dbReference type="PROSITE" id="PS00527">
    <property type="entry name" value="RIBOSOMAL_S14"/>
    <property type="match status" value="1"/>
</dbReference>
<sequence length="61" mass="7175">MAKKSMIIKALRKPKYKTRQNNRCKLCGRPRGYLRDFCMCRICFRKYASEGLIPGVSKSSW</sequence>
<reference key="1">
    <citation type="journal article" date="2006" name="BMC Genomics">
        <title>Comparative genome analysis: selection pressure on the Borrelia vls cassettes is essential for infectivity.</title>
        <authorList>
            <person name="Gloeckner G."/>
            <person name="Schulte-Spechtel U."/>
            <person name="Schilhabel M."/>
            <person name="Felder M."/>
            <person name="Suehnel J."/>
            <person name="Wilske B."/>
            <person name="Platzer M."/>
        </authorList>
    </citation>
    <scope>NUCLEOTIDE SEQUENCE [LARGE SCALE GENOMIC DNA]</scope>
    <source>
        <strain>PKo</strain>
    </source>
</reference>
<reference key="2">
    <citation type="journal article" date="2011" name="J. Bacteriol.">
        <title>Whole-genome sequences of two Borrelia afzelii and two Borrelia garinii Lyme disease agent isolates.</title>
        <authorList>
            <person name="Casjens S.R."/>
            <person name="Mongodin E.F."/>
            <person name="Qiu W.G."/>
            <person name="Dunn J.J."/>
            <person name="Luft B.J."/>
            <person name="Fraser-Liggett C.M."/>
            <person name="Schutzer S.E."/>
        </authorList>
    </citation>
    <scope>NUCLEOTIDE SEQUENCE [LARGE SCALE GENOMIC DNA]</scope>
    <source>
        <strain>PKo</strain>
    </source>
</reference>
<proteinExistence type="inferred from homology"/>
<protein>
    <recommendedName>
        <fullName evidence="1">Small ribosomal subunit protein uS14</fullName>
    </recommendedName>
    <alternativeName>
        <fullName evidence="2">30S ribosomal protein S14 type Z</fullName>
    </alternativeName>
</protein>
<feature type="chain" id="PRO_0000269086" description="Small ribosomal subunit protein uS14">
    <location>
        <begin position="1"/>
        <end position="61"/>
    </location>
</feature>
<feature type="binding site" evidence="1">
    <location>
        <position position="24"/>
    </location>
    <ligand>
        <name>Zn(2+)</name>
        <dbReference type="ChEBI" id="CHEBI:29105"/>
    </ligand>
</feature>
<feature type="binding site" evidence="1">
    <location>
        <position position="27"/>
    </location>
    <ligand>
        <name>Zn(2+)</name>
        <dbReference type="ChEBI" id="CHEBI:29105"/>
    </ligand>
</feature>
<feature type="binding site" evidence="1">
    <location>
        <position position="40"/>
    </location>
    <ligand>
        <name>Zn(2+)</name>
        <dbReference type="ChEBI" id="CHEBI:29105"/>
    </ligand>
</feature>
<feature type="binding site" evidence="1">
    <location>
        <position position="43"/>
    </location>
    <ligand>
        <name>Zn(2+)</name>
        <dbReference type="ChEBI" id="CHEBI:29105"/>
    </ligand>
</feature>
<evidence type="ECO:0000255" key="1">
    <source>
        <dbReference type="HAMAP-Rule" id="MF_01364"/>
    </source>
</evidence>
<evidence type="ECO:0000305" key="2"/>
<accession>Q0SN16</accession>
<gene>
    <name evidence="1" type="primary">rpsZ</name>
    <name evidence="1" type="synonym">rpsN</name>
    <name type="ordered locus">BAPKO_0519</name>
    <name type="ordered locus">BafPKo_0507.1</name>
</gene>
<comment type="function">
    <text evidence="1">Binds 16S rRNA, required for the assembly of 30S particles and may also be responsible for determining the conformation of the 16S rRNA at the A site.</text>
</comment>
<comment type="cofactor">
    <cofactor evidence="1">
        <name>Zn(2+)</name>
        <dbReference type="ChEBI" id="CHEBI:29105"/>
    </cofactor>
    <text evidence="1">Binds 1 zinc ion per subunit.</text>
</comment>
<comment type="subunit">
    <text evidence="1">Part of the 30S ribosomal subunit. Contacts proteins S3 and S10.</text>
</comment>
<comment type="similarity">
    <text evidence="1">Belongs to the universal ribosomal protein uS14 family. Zinc-binding uS14 subfamily.</text>
</comment>
<name>RS14Z_BORAP</name>
<organism>
    <name type="scientific">Borreliella afzelii (strain PKo)</name>
    <name type="common">Borrelia afzelii</name>
    <dbReference type="NCBI Taxonomy" id="390236"/>
    <lineage>
        <taxon>Bacteria</taxon>
        <taxon>Pseudomonadati</taxon>
        <taxon>Spirochaetota</taxon>
        <taxon>Spirochaetia</taxon>
        <taxon>Spirochaetales</taxon>
        <taxon>Borreliaceae</taxon>
        <taxon>Borreliella</taxon>
    </lineage>
</organism>
<keyword id="KW-0479">Metal-binding</keyword>
<keyword id="KW-0687">Ribonucleoprotein</keyword>
<keyword id="KW-0689">Ribosomal protein</keyword>
<keyword id="KW-0694">RNA-binding</keyword>
<keyword id="KW-0699">rRNA-binding</keyword>
<keyword id="KW-0862">Zinc</keyword>